<protein>
    <recommendedName>
        <fullName evidence="1">ATP-dependent dethiobiotin synthetase BioD</fullName>
        <ecNumber evidence="1">6.3.3.3</ecNumber>
    </recommendedName>
    <alternativeName>
        <fullName evidence="1">DTB synthetase</fullName>
        <shortName evidence="1">DTBS</shortName>
    </alternativeName>
    <alternativeName>
        <fullName evidence="1">Dethiobiotin synthase</fullName>
    </alternativeName>
</protein>
<organism>
    <name type="scientific">Wigglesworthia glossinidia brevipalpis</name>
    <dbReference type="NCBI Taxonomy" id="36870"/>
    <lineage>
        <taxon>Bacteria</taxon>
        <taxon>Pseudomonadati</taxon>
        <taxon>Pseudomonadota</taxon>
        <taxon>Gammaproteobacteria</taxon>
        <taxon>Enterobacterales</taxon>
        <taxon>Erwiniaceae</taxon>
        <taxon>Wigglesworthia</taxon>
    </lineage>
</organism>
<evidence type="ECO:0000255" key="1">
    <source>
        <dbReference type="HAMAP-Rule" id="MF_00336"/>
    </source>
</evidence>
<accession>Q8D298</accession>
<gene>
    <name evidence="1" type="primary">bioD</name>
    <name type="ordered locus">WIGBR4560</name>
</gene>
<proteinExistence type="inferred from homology"/>
<reference key="1">
    <citation type="journal article" date="2002" name="Nat. Genet.">
        <title>Genome sequence of the endocellular obligate symbiont of tsetse flies, Wigglesworthia glossinidia.</title>
        <authorList>
            <person name="Akman L."/>
            <person name="Yamashita A."/>
            <person name="Watanabe H."/>
            <person name="Oshima K."/>
            <person name="Shiba T."/>
            <person name="Hattori M."/>
            <person name="Aksoy S."/>
        </authorList>
    </citation>
    <scope>NUCLEOTIDE SEQUENCE [LARGE SCALE GENOMIC DNA]</scope>
</reference>
<keyword id="KW-0067">ATP-binding</keyword>
<keyword id="KW-0093">Biotin biosynthesis</keyword>
<keyword id="KW-0963">Cytoplasm</keyword>
<keyword id="KW-0436">Ligase</keyword>
<keyword id="KW-0460">Magnesium</keyword>
<keyword id="KW-0479">Metal-binding</keyword>
<keyword id="KW-0547">Nucleotide-binding</keyword>
<keyword id="KW-1185">Reference proteome</keyword>
<name>BIOD_WIGBR</name>
<comment type="function">
    <text evidence="1">Catalyzes a mechanistically unusual reaction, the ATP-dependent insertion of CO2 between the N7 and N8 nitrogen atoms of 7,8-diaminopelargonic acid (DAPA, also called 7,8-diammoniononanoate) to form a ureido ring.</text>
</comment>
<comment type="catalytic activity">
    <reaction evidence="1">
        <text>(7R,8S)-7,8-diammoniononanoate + CO2 + ATP = (4R,5S)-dethiobiotin + ADP + phosphate + 3 H(+)</text>
        <dbReference type="Rhea" id="RHEA:15805"/>
        <dbReference type="ChEBI" id="CHEBI:15378"/>
        <dbReference type="ChEBI" id="CHEBI:16526"/>
        <dbReference type="ChEBI" id="CHEBI:30616"/>
        <dbReference type="ChEBI" id="CHEBI:43474"/>
        <dbReference type="ChEBI" id="CHEBI:149469"/>
        <dbReference type="ChEBI" id="CHEBI:149473"/>
        <dbReference type="ChEBI" id="CHEBI:456216"/>
        <dbReference type="EC" id="6.3.3.3"/>
    </reaction>
</comment>
<comment type="cofactor">
    <cofactor evidence="1">
        <name>Mg(2+)</name>
        <dbReference type="ChEBI" id="CHEBI:18420"/>
    </cofactor>
</comment>
<comment type="pathway">
    <text evidence="1">Cofactor biosynthesis; biotin biosynthesis; biotin from 7,8-diaminononanoate: step 1/2.</text>
</comment>
<comment type="subunit">
    <text evidence="1">Homodimer.</text>
</comment>
<comment type="subcellular location">
    <subcellularLocation>
        <location evidence="1">Cytoplasm</location>
    </subcellularLocation>
</comment>
<comment type="similarity">
    <text evidence="1">Belongs to the dethiobiotin synthetase family.</text>
</comment>
<feature type="chain" id="PRO_0000187997" description="ATP-dependent dethiobiotin synthetase BioD">
    <location>
        <begin position="1"/>
        <end position="227"/>
    </location>
</feature>
<feature type="active site" evidence="1">
    <location>
        <position position="38"/>
    </location>
</feature>
<feature type="binding site" evidence="1">
    <location>
        <begin position="13"/>
        <end position="18"/>
    </location>
    <ligand>
        <name>ATP</name>
        <dbReference type="ChEBI" id="CHEBI:30616"/>
    </ligand>
</feature>
<feature type="binding site" evidence="1">
    <location>
        <position position="17"/>
    </location>
    <ligand>
        <name>Mg(2+)</name>
        <dbReference type="ChEBI" id="CHEBI:18420"/>
    </ligand>
</feature>
<feature type="binding site" evidence="1">
    <location>
        <position position="42"/>
    </location>
    <ligand>
        <name>substrate</name>
    </ligand>
</feature>
<feature type="binding site" evidence="1">
    <location>
        <position position="55"/>
    </location>
    <ligand>
        <name>ATP</name>
        <dbReference type="ChEBI" id="CHEBI:30616"/>
    </ligand>
</feature>
<feature type="binding site" evidence="1">
    <location>
        <position position="55"/>
    </location>
    <ligand>
        <name>Mg(2+)</name>
        <dbReference type="ChEBI" id="CHEBI:18420"/>
    </ligand>
</feature>
<feature type="binding site" evidence="1">
    <location>
        <begin position="117"/>
        <end position="120"/>
    </location>
    <ligand>
        <name>ATP</name>
        <dbReference type="ChEBI" id="CHEBI:30616"/>
    </ligand>
</feature>
<feature type="binding site" evidence="1">
    <location>
        <position position="117"/>
    </location>
    <ligand>
        <name>Mg(2+)</name>
        <dbReference type="ChEBI" id="CHEBI:18420"/>
    </ligand>
</feature>
<feature type="binding site" evidence="1">
    <location>
        <begin position="177"/>
        <end position="178"/>
    </location>
    <ligand>
        <name>ATP</name>
        <dbReference type="ChEBI" id="CHEBI:30616"/>
    </ligand>
</feature>
<feature type="binding site" evidence="1">
    <location>
        <begin position="206"/>
        <end position="208"/>
    </location>
    <ligand>
        <name>ATP</name>
        <dbReference type="ChEBI" id="CHEBI:30616"/>
    </ligand>
</feature>
<feature type="binding site" evidence="1">
    <location>
        <position position="213"/>
    </location>
    <ligand>
        <name>ATP</name>
        <dbReference type="ChEBI" id="CHEBI:30616"/>
    </ligand>
</feature>
<sequence length="227" mass="26163">MINRYFITGTDTNIGKTISVCALLQYLNKLGNKSVGCKLISSGCKKIKNKIFNEDVVNIMKYNNIKFKYKDINPFAFLEKTAPHIASKRKNIFINHILLSNKLNKFLNYDIDYLIIEGFGGWKVPINSNSMYSEWVSNEKLPIILVVGIKLGCINHALLTIESIKNSNAIILGWIANHLEKDLINKNDYFKYLKKVIKYPLIGKIPFIKNKKNFSNLHKYIFLKKVI</sequence>
<dbReference type="EC" id="6.3.3.3" evidence="1"/>
<dbReference type="EMBL" id="BA000021">
    <property type="protein sequence ID" value="BAC24602.1"/>
    <property type="molecule type" value="Genomic_DNA"/>
</dbReference>
<dbReference type="SMR" id="Q8D298"/>
<dbReference type="STRING" id="36870.gene:10368959"/>
<dbReference type="KEGG" id="wbr:bioD"/>
<dbReference type="eggNOG" id="COG0132">
    <property type="taxonomic scope" value="Bacteria"/>
</dbReference>
<dbReference type="HOGENOM" id="CLU_072551_0_0_6"/>
<dbReference type="OrthoDB" id="9802097at2"/>
<dbReference type="UniPathway" id="UPA00078">
    <property type="reaction ID" value="UER00161"/>
</dbReference>
<dbReference type="Proteomes" id="UP000000562">
    <property type="component" value="Chromosome"/>
</dbReference>
<dbReference type="GO" id="GO:0005829">
    <property type="term" value="C:cytosol"/>
    <property type="evidence" value="ECO:0007669"/>
    <property type="project" value="TreeGrafter"/>
</dbReference>
<dbReference type="GO" id="GO:0005524">
    <property type="term" value="F:ATP binding"/>
    <property type="evidence" value="ECO:0007669"/>
    <property type="project" value="UniProtKB-UniRule"/>
</dbReference>
<dbReference type="GO" id="GO:0004141">
    <property type="term" value="F:dethiobiotin synthase activity"/>
    <property type="evidence" value="ECO:0007669"/>
    <property type="project" value="UniProtKB-UniRule"/>
</dbReference>
<dbReference type="GO" id="GO:0000287">
    <property type="term" value="F:magnesium ion binding"/>
    <property type="evidence" value="ECO:0007669"/>
    <property type="project" value="UniProtKB-UniRule"/>
</dbReference>
<dbReference type="GO" id="GO:0009102">
    <property type="term" value="P:biotin biosynthetic process"/>
    <property type="evidence" value="ECO:0007669"/>
    <property type="project" value="UniProtKB-UniRule"/>
</dbReference>
<dbReference type="CDD" id="cd03109">
    <property type="entry name" value="DTBS"/>
    <property type="match status" value="1"/>
</dbReference>
<dbReference type="FunFam" id="3.40.50.300:FF:000292">
    <property type="entry name" value="ATP-dependent dethiobiotin synthetase BioD"/>
    <property type="match status" value="1"/>
</dbReference>
<dbReference type="Gene3D" id="3.40.50.300">
    <property type="entry name" value="P-loop containing nucleotide triphosphate hydrolases"/>
    <property type="match status" value="1"/>
</dbReference>
<dbReference type="HAMAP" id="MF_00336">
    <property type="entry name" value="BioD"/>
    <property type="match status" value="1"/>
</dbReference>
<dbReference type="InterPro" id="IPR004472">
    <property type="entry name" value="DTB_synth_BioD"/>
</dbReference>
<dbReference type="InterPro" id="IPR027417">
    <property type="entry name" value="P-loop_NTPase"/>
</dbReference>
<dbReference type="NCBIfam" id="TIGR00347">
    <property type="entry name" value="bioD"/>
    <property type="match status" value="1"/>
</dbReference>
<dbReference type="PANTHER" id="PTHR43210">
    <property type="entry name" value="DETHIOBIOTIN SYNTHETASE"/>
    <property type="match status" value="1"/>
</dbReference>
<dbReference type="PANTHER" id="PTHR43210:SF5">
    <property type="entry name" value="DETHIOBIOTIN SYNTHETASE"/>
    <property type="match status" value="1"/>
</dbReference>
<dbReference type="Pfam" id="PF13500">
    <property type="entry name" value="AAA_26"/>
    <property type="match status" value="1"/>
</dbReference>
<dbReference type="PIRSF" id="PIRSF006755">
    <property type="entry name" value="DTB_synth"/>
    <property type="match status" value="1"/>
</dbReference>
<dbReference type="SUPFAM" id="SSF52540">
    <property type="entry name" value="P-loop containing nucleoside triphosphate hydrolases"/>
    <property type="match status" value="1"/>
</dbReference>